<proteinExistence type="inferred from homology"/>
<protein>
    <recommendedName>
        <fullName evidence="1">Transcription antitermination protein NusB</fullName>
    </recommendedName>
    <alternativeName>
        <fullName evidence="1">Antitermination factor NusB</fullName>
    </alternativeName>
</protein>
<comment type="function">
    <text evidence="1">Involved in transcription antitermination. Required for transcription of ribosomal RNA (rRNA) genes. Binds specifically to the boxA antiterminator sequence of the ribosomal RNA (rrn) operons.</text>
</comment>
<comment type="similarity">
    <text evidence="1">Belongs to the NusB family.</text>
</comment>
<accession>B5ZXV2</accession>
<reference key="1">
    <citation type="journal article" date="2010" name="Stand. Genomic Sci.">
        <title>Complete genome sequence of Rhizobium leguminosarum bv trifolii strain WSM2304, an effective microsymbiont of the South American clover Trifolium polymorphum.</title>
        <authorList>
            <person name="Reeve W."/>
            <person name="O'Hara G."/>
            <person name="Chain P."/>
            <person name="Ardley J."/>
            <person name="Brau L."/>
            <person name="Nandesena K."/>
            <person name="Tiwari R."/>
            <person name="Malfatti S."/>
            <person name="Kiss H."/>
            <person name="Lapidus A."/>
            <person name="Copeland A."/>
            <person name="Nolan M."/>
            <person name="Land M."/>
            <person name="Ivanova N."/>
            <person name="Mavromatis K."/>
            <person name="Markowitz V."/>
            <person name="Kyrpides N."/>
            <person name="Melino V."/>
            <person name="Denton M."/>
            <person name="Yates R."/>
            <person name="Howieson J."/>
        </authorList>
    </citation>
    <scope>NUCLEOTIDE SEQUENCE [LARGE SCALE GENOMIC DNA]</scope>
    <source>
        <strain>WSM2304</strain>
    </source>
</reference>
<dbReference type="EMBL" id="CP001191">
    <property type="protein sequence ID" value="ACI54485.1"/>
    <property type="molecule type" value="Genomic_DNA"/>
</dbReference>
<dbReference type="RefSeq" id="WP_003587419.1">
    <property type="nucleotide sequence ID" value="NC_011369.1"/>
</dbReference>
<dbReference type="SMR" id="B5ZXV2"/>
<dbReference type="STRING" id="395492.Rleg2_1191"/>
<dbReference type="KEGG" id="rlt:Rleg2_1191"/>
<dbReference type="eggNOG" id="COG0781">
    <property type="taxonomic scope" value="Bacteria"/>
</dbReference>
<dbReference type="HOGENOM" id="CLU_087843_4_0_5"/>
<dbReference type="Proteomes" id="UP000008330">
    <property type="component" value="Chromosome"/>
</dbReference>
<dbReference type="GO" id="GO:0005829">
    <property type="term" value="C:cytosol"/>
    <property type="evidence" value="ECO:0007669"/>
    <property type="project" value="TreeGrafter"/>
</dbReference>
<dbReference type="GO" id="GO:0003723">
    <property type="term" value="F:RNA binding"/>
    <property type="evidence" value="ECO:0007669"/>
    <property type="project" value="UniProtKB-UniRule"/>
</dbReference>
<dbReference type="GO" id="GO:0006353">
    <property type="term" value="P:DNA-templated transcription termination"/>
    <property type="evidence" value="ECO:0007669"/>
    <property type="project" value="UniProtKB-UniRule"/>
</dbReference>
<dbReference type="GO" id="GO:0031564">
    <property type="term" value="P:transcription antitermination"/>
    <property type="evidence" value="ECO:0007669"/>
    <property type="project" value="UniProtKB-KW"/>
</dbReference>
<dbReference type="Gene3D" id="1.10.940.10">
    <property type="entry name" value="NusB-like"/>
    <property type="match status" value="1"/>
</dbReference>
<dbReference type="HAMAP" id="MF_00073">
    <property type="entry name" value="NusB"/>
    <property type="match status" value="1"/>
</dbReference>
<dbReference type="InterPro" id="IPR035926">
    <property type="entry name" value="NusB-like_sf"/>
</dbReference>
<dbReference type="InterPro" id="IPR011605">
    <property type="entry name" value="NusB_fam"/>
</dbReference>
<dbReference type="InterPro" id="IPR006027">
    <property type="entry name" value="NusB_RsmB_TIM44"/>
</dbReference>
<dbReference type="NCBIfam" id="TIGR01951">
    <property type="entry name" value="nusB"/>
    <property type="match status" value="1"/>
</dbReference>
<dbReference type="PANTHER" id="PTHR11078:SF3">
    <property type="entry name" value="ANTITERMINATION NUSB DOMAIN-CONTAINING PROTEIN"/>
    <property type="match status" value="1"/>
</dbReference>
<dbReference type="PANTHER" id="PTHR11078">
    <property type="entry name" value="N UTILIZATION SUBSTANCE PROTEIN B-RELATED"/>
    <property type="match status" value="1"/>
</dbReference>
<dbReference type="Pfam" id="PF01029">
    <property type="entry name" value="NusB"/>
    <property type="match status" value="1"/>
</dbReference>
<dbReference type="SUPFAM" id="SSF48013">
    <property type="entry name" value="NusB-like"/>
    <property type="match status" value="1"/>
</dbReference>
<feature type="chain" id="PRO_1000092577" description="Transcription antitermination protein NusB">
    <location>
        <begin position="1"/>
        <end position="160"/>
    </location>
</feature>
<organism>
    <name type="scientific">Rhizobium leguminosarum bv. trifolii (strain WSM2304)</name>
    <dbReference type="NCBI Taxonomy" id="395492"/>
    <lineage>
        <taxon>Bacteria</taxon>
        <taxon>Pseudomonadati</taxon>
        <taxon>Pseudomonadota</taxon>
        <taxon>Alphaproteobacteria</taxon>
        <taxon>Hyphomicrobiales</taxon>
        <taxon>Rhizobiaceae</taxon>
        <taxon>Rhizobium/Agrobacterium group</taxon>
        <taxon>Rhizobium</taxon>
    </lineage>
</organism>
<keyword id="KW-1185">Reference proteome</keyword>
<keyword id="KW-0694">RNA-binding</keyword>
<keyword id="KW-0804">Transcription</keyword>
<keyword id="KW-0889">Transcription antitermination</keyword>
<keyword id="KW-0805">Transcription regulation</keyword>
<name>NUSB_RHILW</name>
<gene>
    <name evidence="1" type="primary">nusB</name>
    <name type="ordered locus">Rleg2_1191</name>
</gene>
<sequence length="160" mass="17642">MNDDKTERPVKTANQRGAARLAAVQALYQMDVGGTGVLEIVAEYEAHRLGQELDGATYLKADAGWFRSIVSGVVRDQTRLDPLIAAALQDDWALSRLDSTVRAILRAGVFEITDRKDVPVAVIVTEYVEIAQAFFDDDEPKLVNAVLDRIAKQVRGETKK</sequence>
<evidence type="ECO:0000255" key="1">
    <source>
        <dbReference type="HAMAP-Rule" id="MF_00073"/>
    </source>
</evidence>